<name>RSMA_NEOSM</name>
<dbReference type="EC" id="2.1.1.182" evidence="1"/>
<dbReference type="EMBL" id="CP000237">
    <property type="protein sequence ID" value="ABD46348.1"/>
    <property type="molecule type" value="Genomic_DNA"/>
</dbReference>
<dbReference type="RefSeq" id="WP_011451757.1">
    <property type="nucleotide sequence ID" value="NC_007798.1"/>
</dbReference>
<dbReference type="SMR" id="Q2GE45"/>
<dbReference type="STRING" id="222891.NSE_0362"/>
<dbReference type="KEGG" id="nse:NSE_0362"/>
<dbReference type="eggNOG" id="COG0030">
    <property type="taxonomic scope" value="Bacteria"/>
</dbReference>
<dbReference type="HOGENOM" id="CLU_041220_0_1_5"/>
<dbReference type="OrthoDB" id="9814755at2"/>
<dbReference type="Proteomes" id="UP000001942">
    <property type="component" value="Chromosome"/>
</dbReference>
<dbReference type="GO" id="GO:0005737">
    <property type="term" value="C:cytoplasm"/>
    <property type="evidence" value="ECO:0007669"/>
    <property type="project" value="UniProtKB-SubCell"/>
</dbReference>
<dbReference type="GO" id="GO:0052908">
    <property type="term" value="F:16S rRNA (adenine(1518)-N(6)/adenine(1519)-N(6))-dimethyltransferase activity"/>
    <property type="evidence" value="ECO:0007669"/>
    <property type="project" value="UniProtKB-EC"/>
</dbReference>
<dbReference type="GO" id="GO:0003723">
    <property type="term" value="F:RNA binding"/>
    <property type="evidence" value="ECO:0007669"/>
    <property type="project" value="UniProtKB-KW"/>
</dbReference>
<dbReference type="CDD" id="cd02440">
    <property type="entry name" value="AdoMet_MTases"/>
    <property type="match status" value="1"/>
</dbReference>
<dbReference type="Gene3D" id="1.10.8.100">
    <property type="entry name" value="Ribosomal RNA adenine dimethylase-like, domain 2"/>
    <property type="match status" value="1"/>
</dbReference>
<dbReference type="Gene3D" id="3.40.50.150">
    <property type="entry name" value="Vaccinia Virus protein VP39"/>
    <property type="match status" value="1"/>
</dbReference>
<dbReference type="HAMAP" id="MF_00607">
    <property type="entry name" value="16SrRNA_methyltr_A"/>
    <property type="match status" value="1"/>
</dbReference>
<dbReference type="InterPro" id="IPR001737">
    <property type="entry name" value="KsgA/Erm"/>
</dbReference>
<dbReference type="InterPro" id="IPR023165">
    <property type="entry name" value="rRNA_Ade_diMease-like_C"/>
</dbReference>
<dbReference type="InterPro" id="IPR020596">
    <property type="entry name" value="rRNA_Ade_Mease_Trfase_CS"/>
</dbReference>
<dbReference type="InterPro" id="IPR020598">
    <property type="entry name" value="rRNA_Ade_methylase_Trfase_N"/>
</dbReference>
<dbReference type="InterPro" id="IPR011530">
    <property type="entry name" value="rRNA_adenine_dimethylase"/>
</dbReference>
<dbReference type="InterPro" id="IPR029063">
    <property type="entry name" value="SAM-dependent_MTases_sf"/>
</dbReference>
<dbReference type="NCBIfam" id="TIGR00755">
    <property type="entry name" value="ksgA"/>
    <property type="match status" value="1"/>
</dbReference>
<dbReference type="PANTHER" id="PTHR11727">
    <property type="entry name" value="DIMETHYLADENOSINE TRANSFERASE"/>
    <property type="match status" value="1"/>
</dbReference>
<dbReference type="PANTHER" id="PTHR11727:SF7">
    <property type="entry name" value="DIMETHYLADENOSINE TRANSFERASE-RELATED"/>
    <property type="match status" value="1"/>
</dbReference>
<dbReference type="Pfam" id="PF00398">
    <property type="entry name" value="RrnaAD"/>
    <property type="match status" value="1"/>
</dbReference>
<dbReference type="SMART" id="SM00650">
    <property type="entry name" value="rADc"/>
    <property type="match status" value="1"/>
</dbReference>
<dbReference type="SUPFAM" id="SSF53335">
    <property type="entry name" value="S-adenosyl-L-methionine-dependent methyltransferases"/>
    <property type="match status" value="1"/>
</dbReference>
<dbReference type="PROSITE" id="PS01131">
    <property type="entry name" value="RRNA_A_DIMETH"/>
    <property type="match status" value="1"/>
</dbReference>
<dbReference type="PROSITE" id="PS51689">
    <property type="entry name" value="SAM_RNA_A_N6_MT"/>
    <property type="match status" value="1"/>
</dbReference>
<feature type="chain" id="PRO_0000257309" description="Ribosomal RNA small subunit methyltransferase A">
    <location>
        <begin position="1"/>
        <end position="262"/>
    </location>
</feature>
<feature type="binding site" evidence="1">
    <location>
        <position position="11"/>
    </location>
    <ligand>
        <name>S-adenosyl-L-methionine</name>
        <dbReference type="ChEBI" id="CHEBI:59789"/>
    </ligand>
</feature>
<feature type="binding site" evidence="1">
    <location>
        <position position="13"/>
    </location>
    <ligand>
        <name>S-adenosyl-L-methionine</name>
        <dbReference type="ChEBI" id="CHEBI:59789"/>
    </ligand>
</feature>
<feature type="binding site" evidence="1">
    <location>
        <position position="38"/>
    </location>
    <ligand>
        <name>S-adenosyl-L-methionine</name>
        <dbReference type="ChEBI" id="CHEBI:59789"/>
    </ligand>
</feature>
<feature type="binding site" evidence="1">
    <location>
        <position position="60"/>
    </location>
    <ligand>
        <name>S-adenosyl-L-methionine</name>
        <dbReference type="ChEBI" id="CHEBI:59789"/>
    </ligand>
</feature>
<feature type="binding site" evidence="1">
    <location>
        <position position="85"/>
    </location>
    <ligand>
        <name>S-adenosyl-L-methionine</name>
        <dbReference type="ChEBI" id="CHEBI:59789"/>
    </ligand>
</feature>
<feature type="binding site" evidence="1">
    <location>
        <position position="105"/>
    </location>
    <ligand>
        <name>S-adenosyl-L-methionine</name>
        <dbReference type="ChEBI" id="CHEBI:59789"/>
    </ligand>
</feature>
<reference key="1">
    <citation type="journal article" date="2006" name="PLoS Genet.">
        <title>Comparative genomics of emerging human ehrlichiosis agents.</title>
        <authorList>
            <person name="Dunning Hotopp J.C."/>
            <person name="Lin M."/>
            <person name="Madupu R."/>
            <person name="Crabtree J."/>
            <person name="Angiuoli S.V."/>
            <person name="Eisen J.A."/>
            <person name="Seshadri R."/>
            <person name="Ren Q."/>
            <person name="Wu M."/>
            <person name="Utterback T.R."/>
            <person name="Smith S."/>
            <person name="Lewis M."/>
            <person name="Khouri H."/>
            <person name="Zhang C."/>
            <person name="Niu H."/>
            <person name="Lin Q."/>
            <person name="Ohashi N."/>
            <person name="Zhi N."/>
            <person name="Nelson W.C."/>
            <person name="Brinkac L.M."/>
            <person name="Dodson R.J."/>
            <person name="Rosovitz M.J."/>
            <person name="Sundaram J.P."/>
            <person name="Daugherty S.C."/>
            <person name="Davidsen T."/>
            <person name="Durkin A.S."/>
            <person name="Gwinn M.L."/>
            <person name="Haft D.H."/>
            <person name="Selengut J.D."/>
            <person name="Sullivan S.A."/>
            <person name="Zafar N."/>
            <person name="Zhou L."/>
            <person name="Benahmed F."/>
            <person name="Forberger H."/>
            <person name="Halpin R."/>
            <person name="Mulligan S."/>
            <person name="Robinson J."/>
            <person name="White O."/>
            <person name="Rikihisa Y."/>
            <person name="Tettelin H."/>
        </authorList>
    </citation>
    <scope>NUCLEOTIDE SEQUENCE [LARGE SCALE GENOMIC DNA]</scope>
    <source>
        <strain>ATCC VR-367 / Miyayama</strain>
    </source>
</reference>
<keyword id="KW-0963">Cytoplasm</keyword>
<keyword id="KW-0489">Methyltransferase</keyword>
<keyword id="KW-0694">RNA-binding</keyword>
<keyword id="KW-0698">rRNA processing</keyword>
<keyword id="KW-0949">S-adenosyl-L-methionine</keyword>
<keyword id="KW-0808">Transferase</keyword>
<gene>
    <name evidence="1" type="primary">rsmA</name>
    <name evidence="1" type="synonym">ksgA</name>
    <name type="ordered locus">NSE_0362</name>
</gene>
<sequence length="262" mass="29599">MQRYNKLLGQHFIYDREVLDKIIDAATSVKGKHIFEIGAGSGTLSAAILLREPASLISVEKDKRFSESLSSLMAQYQNYKYTIGDALLIRLSSLFKQEKVTIIANLPYNIATHLLLGWMNELEQVREMVLMFQKEVADRICAQPKSKNYGALSVLVQLECKAESQFALAPEVFTPPPRVTSTVLKLTPLKNKWPRNKPVLEKILTEGFSQRRKMIKKSLSRIFKDSEALHSALAQVGASPTMRIEELNPEQLCRLSCIAEMD</sequence>
<proteinExistence type="inferred from homology"/>
<protein>
    <recommendedName>
        <fullName evidence="1">Ribosomal RNA small subunit methyltransferase A</fullName>
        <ecNumber evidence="1">2.1.1.182</ecNumber>
    </recommendedName>
    <alternativeName>
        <fullName evidence="1">16S rRNA (adenine(1518)-N(6)/adenine(1519)-N(6))-dimethyltransferase</fullName>
    </alternativeName>
    <alternativeName>
        <fullName evidence="1">16S rRNA dimethyladenosine transferase</fullName>
    </alternativeName>
    <alternativeName>
        <fullName evidence="1">16S rRNA dimethylase</fullName>
    </alternativeName>
    <alternativeName>
        <fullName evidence="1">S-adenosylmethionine-6-N', N'-adenosyl(rRNA) dimethyltransferase</fullName>
    </alternativeName>
</protein>
<evidence type="ECO:0000255" key="1">
    <source>
        <dbReference type="HAMAP-Rule" id="MF_00607"/>
    </source>
</evidence>
<organism>
    <name type="scientific">Neorickettsia sennetsu (strain ATCC VR-367 / Miyayama)</name>
    <name type="common">Ehrlichia sennetsu</name>
    <dbReference type="NCBI Taxonomy" id="222891"/>
    <lineage>
        <taxon>Bacteria</taxon>
        <taxon>Pseudomonadati</taxon>
        <taxon>Pseudomonadota</taxon>
        <taxon>Alphaproteobacteria</taxon>
        <taxon>Rickettsiales</taxon>
        <taxon>Anaplasmataceae</taxon>
        <taxon>Neorickettsia</taxon>
    </lineage>
</organism>
<accession>Q2GE45</accession>
<comment type="function">
    <text evidence="1">Specifically dimethylates two adjacent adenosines (A1518 and A1519) in the loop of a conserved hairpin near the 3'-end of 16S rRNA in the 30S particle. May play a critical role in biogenesis of 30S subunits.</text>
</comment>
<comment type="catalytic activity">
    <reaction evidence="1">
        <text>adenosine(1518)/adenosine(1519) in 16S rRNA + 4 S-adenosyl-L-methionine = N(6)-dimethyladenosine(1518)/N(6)-dimethyladenosine(1519) in 16S rRNA + 4 S-adenosyl-L-homocysteine + 4 H(+)</text>
        <dbReference type="Rhea" id="RHEA:19609"/>
        <dbReference type="Rhea" id="RHEA-COMP:10232"/>
        <dbReference type="Rhea" id="RHEA-COMP:10233"/>
        <dbReference type="ChEBI" id="CHEBI:15378"/>
        <dbReference type="ChEBI" id="CHEBI:57856"/>
        <dbReference type="ChEBI" id="CHEBI:59789"/>
        <dbReference type="ChEBI" id="CHEBI:74411"/>
        <dbReference type="ChEBI" id="CHEBI:74493"/>
        <dbReference type="EC" id="2.1.1.182"/>
    </reaction>
</comment>
<comment type="subcellular location">
    <subcellularLocation>
        <location evidence="1">Cytoplasm</location>
    </subcellularLocation>
</comment>
<comment type="similarity">
    <text evidence="1">Belongs to the class I-like SAM-binding methyltransferase superfamily. rRNA adenine N(6)-methyltransferase family. RsmA subfamily.</text>
</comment>